<sequence length="356" mass="38701">MSIILSLETSCDESAAALVSNEKGKIDLLANEIASQIDEHANWGGVVPEIASRRHLENLPFLIEEVFAKSKLQIKDIDAVAATVTPGLAGSLLVGSITARTLANLHQIPFLGIHHLEGHLSSIYLSEKHPKPPFLVLLVSGGHTELIKVDVKHKYQRLGRSHDDAAGEAFDKVARLLGLSYPGGPAIQKIAKSGDPKKFLFPKGRVSKPEGGFYPYDFSFSGLKTAVFRQIEKIRSENKKLPIEDIAASFEYIVAEVLVERSFKCALDQGLNSLVLVGGVAANVRLREMMLAKASENSIDITLAPMEFCTDNAAMIGAAALLRLSSESFKSSMELGVSARWPLEKSDLLYDPIPPF</sequence>
<proteinExistence type="inferred from homology"/>
<gene>
    <name evidence="1" type="primary">tsaD</name>
    <name type="synonym">gcp</name>
    <name type="ordered locus">PMN2A_1802</name>
</gene>
<feature type="chain" id="PRO_0000303485" description="tRNA N6-adenosine threonylcarbamoyltransferase">
    <location>
        <begin position="1"/>
        <end position="356"/>
    </location>
</feature>
<feature type="binding site" evidence="1">
    <location>
        <position position="115"/>
    </location>
    <ligand>
        <name>Fe cation</name>
        <dbReference type="ChEBI" id="CHEBI:24875"/>
    </ligand>
</feature>
<feature type="binding site" evidence="1">
    <location>
        <position position="119"/>
    </location>
    <ligand>
        <name>Fe cation</name>
        <dbReference type="ChEBI" id="CHEBI:24875"/>
    </ligand>
</feature>
<feature type="binding site" evidence="1">
    <location>
        <begin position="138"/>
        <end position="142"/>
    </location>
    <ligand>
        <name>substrate</name>
    </ligand>
</feature>
<feature type="binding site" evidence="1">
    <location>
        <position position="171"/>
    </location>
    <ligand>
        <name>substrate</name>
    </ligand>
</feature>
<feature type="binding site" evidence="1">
    <location>
        <position position="184"/>
    </location>
    <ligand>
        <name>substrate</name>
    </ligand>
</feature>
<feature type="binding site" evidence="1">
    <location>
        <position position="283"/>
    </location>
    <ligand>
        <name>substrate</name>
    </ligand>
</feature>
<feature type="binding site" evidence="1">
    <location>
        <position position="311"/>
    </location>
    <ligand>
        <name>Fe cation</name>
        <dbReference type="ChEBI" id="CHEBI:24875"/>
    </ligand>
</feature>
<name>TSAD_PROMT</name>
<evidence type="ECO:0000255" key="1">
    <source>
        <dbReference type="HAMAP-Rule" id="MF_01445"/>
    </source>
</evidence>
<keyword id="KW-0012">Acyltransferase</keyword>
<keyword id="KW-0963">Cytoplasm</keyword>
<keyword id="KW-0408">Iron</keyword>
<keyword id="KW-0479">Metal-binding</keyword>
<keyword id="KW-1185">Reference proteome</keyword>
<keyword id="KW-0808">Transferase</keyword>
<keyword id="KW-0819">tRNA processing</keyword>
<dbReference type="EC" id="2.3.1.234" evidence="1"/>
<dbReference type="EMBL" id="CP000095">
    <property type="protein sequence ID" value="AAZ59290.1"/>
    <property type="molecule type" value="Genomic_DNA"/>
</dbReference>
<dbReference type="RefSeq" id="WP_011294435.1">
    <property type="nucleotide sequence ID" value="NC_007335.2"/>
</dbReference>
<dbReference type="SMR" id="Q46GV3"/>
<dbReference type="STRING" id="59920.PMN2A_1802"/>
<dbReference type="KEGG" id="pmn:PMN2A_1802"/>
<dbReference type="HOGENOM" id="CLU_023208_0_2_3"/>
<dbReference type="OrthoDB" id="9806197at2"/>
<dbReference type="PhylomeDB" id="Q46GV3"/>
<dbReference type="Proteomes" id="UP000002535">
    <property type="component" value="Chromosome"/>
</dbReference>
<dbReference type="GO" id="GO:0005737">
    <property type="term" value="C:cytoplasm"/>
    <property type="evidence" value="ECO:0007669"/>
    <property type="project" value="UniProtKB-SubCell"/>
</dbReference>
<dbReference type="GO" id="GO:0005506">
    <property type="term" value="F:iron ion binding"/>
    <property type="evidence" value="ECO:0007669"/>
    <property type="project" value="UniProtKB-UniRule"/>
</dbReference>
<dbReference type="GO" id="GO:0061711">
    <property type="term" value="F:N(6)-L-threonylcarbamoyladenine synthase activity"/>
    <property type="evidence" value="ECO:0007669"/>
    <property type="project" value="UniProtKB-EC"/>
</dbReference>
<dbReference type="GO" id="GO:0002949">
    <property type="term" value="P:tRNA threonylcarbamoyladenosine modification"/>
    <property type="evidence" value="ECO:0007669"/>
    <property type="project" value="UniProtKB-UniRule"/>
</dbReference>
<dbReference type="CDD" id="cd24133">
    <property type="entry name" value="ASKHA_NBD_TsaD_bac"/>
    <property type="match status" value="1"/>
</dbReference>
<dbReference type="FunFam" id="3.30.420.40:FF:000012">
    <property type="entry name" value="tRNA N6-adenosine threonylcarbamoyltransferase"/>
    <property type="match status" value="1"/>
</dbReference>
<dbReference type="FunFam" id="3.30.420.40:FF:000040">
    <property type="entry name" value="tRNA N6-adenosine threonylcarbamoyltransferase"/>
    <property type="match status" value="1"/>
</dbReference>
<dbReference type="Gene3D" id="3.30.420.40">
    <property type="match status" value="2"/>
</dbReference>
<dbReference type="HAMAP" id="MF_01445">
    <property type="entry name" value="TsaD"/>
    <property type="match status" value="1"/>
</dbReference>
<dbReference type="InterPro" id="IPR043129">
    <property type="entry name" value="ATPase_NBD"/>
</dbReference>
<dbReference type="InterPro" id="IPR000905">
    <property type="entry name" value="Gcp-like_dom"/>
</dbReference>
<dbReference type="InterPro" id="IPR017861">
    <property type="entry name" value="KAE1/TsaD"/>
</dbReference>
<dbReference type="InterPro" id="IPR017860">
    <property type="entry name" value="Peptidase_M22_CS"/>
</dbReference>
<dbReference type="InterPro" id="IPR022450">
    <property type="entry name" value="TsaD"/>
</dbReference>
<dbReference type="NCBIfam" id="TIGR00329">
    <property type="entry name" value="gcp_kae1"/>
    <property type="match status" value="1"/>
</dbReference>
<dbReference type="NCBIfam" id="TIGR03723">
    <property type="entry name" value="T6A_TsaD_YgjD"/>
    <property type="match status" value="1"/>
</dbReference>
<dbReference type="PANTHER" id="PTHR11735">
    <property type="entry name" value="TRNA N6-ADENOSINE THREONYLCARBAMOYLTRANSFERASE"/>
    <property type="match status" value="1"/>
</dbReference>
<dbReference type="PANTHER" id="PTHR11735:SF6">
    <property type="entry name" value="TRNA N6-ADENOSINE THREONYLCARBAMOYLTRANSFERASE, MITOCHONDRIAL"/>
    <property type="match status" value="1"/>
</dbReference>
<dbReference type="Pfam" id="PF00814">
    <property type="entry name" value="TsaD"/>
    <property type="match status" value="1"/>
</dbReference>
<dbReference type="PRINTS" id="PR00789">
    <property type="entry name" value="OSIALOPTASE"/>
</dbReference>
<dbReference type="SUPFAM" id="SSF53067">
    <property type="entry name" value="Actin-like ATPase domain"/>
    <property type="match status" value="2"/>
</dbReference>
<dbReference type="PROSITE" id="PS01016">
    <property type="entry name" value="GLYCOPROTEASE"/>
    <property type="match status" value="1"/>
</dbReference>
<comment type="function">
    <text evidence="1">Required for the formation of a threonylcarbamoyl group on adenosine at position 37 (t(6)A37) in tRNAs that read codons beginning with adenine. Is involved in the transfer of the threonylcarbamoyl moiety of threonylcarbamoyl-AMP (TC-AMP) to the N6 group of A37, together with TsaE and TsaB. TsaD likely plays a direct catalytic role in this reaction.</text>
</comment>
<comment type="catalytic activity">
    <reaction evidence="1">
        <text>L-threonylcarbamoyladenylate + adenosine(37) in tRNA = N(6)-L-threonylcarbamoyladenosine(37) in tRNA + AMP + H(+)</text>
        <dbReference type="Rhea" id="RHEA:37059"/>
        <dbReference type="Rhea" id="RHEA-COMP:10162"/>
        <dbReference type="Rhea" id="RHEA-COMP:10163"/>
        <dbReference type="ChEBI" id="CHEBI:15378"/>
        <dbReference type="ChEBI" id="CHEBI:73682"/>
        <dbReference type="ChEBI" id="CHEBI:74411"/>
        <dbReference type="ChEBI" id="CHEBI:74418"/>
        <dbReference type="ChEBI" id="CHEBI:456215"/>
        <dbReference type="EC" id="2.3.1.234"/>
    </reaction>
</comment>
<comment type="cofactor">
    <cofactor evidence="1">
        <name>Fe(2+)</name>
        <dbReference type="ChEBI" id="CHEBI:29033"/>
    </cofactor>
    <text evidence="1">Binds 1 Fe(2+) ion per subunit.</text>
</comment>
<comment type="subcellular location">
    <subcellularLocation>
        <location evidence="1">Cytoplasm</location>
    </subcellularLocation>
</comment>
<comment type="similarity">
    <text evidence="1">Belongs to the KAE1 / TsaD family.</text>
</comment>
<organism>
    <name type="scientific">Prochlorococcus marinus (strain NATL2A)</name>
    <dbReference type="NCBI Taxonomy" id="59920"/>
    <lineage>
        <taxon>Bacteria</taxon>
        <taxon>Bacillati</taxon>
        <taxon>Cyanobacteriota</taxon>
        <taxon>Cyanophyceae</taxon>
        <taxon>Synechococcales</taxon>
        <taxon>Prochlorococcaceae</taxon>
        <taxon>Prochlorococcus</taxon>
    </lineage>
</organism>
<protein>
    <recommendedName>
        <fullName evidence="1">tRNA N6-adenosine threonylcarbamoyltransferase</fullName>
        <ecNumber evidence="1">2.3.1.234</ecNumber>
    </recommendedName>
    <alternativeName>
        <fullName evidence="1">N6-L-threonylcarbamoyladenine synthase</fullName>
        <shortName evidence="1">t(6)A synthase</shortName>
    </alternativeName>
    <alternativeName>
        <fullName evidence="1">t(6)A37 threonylcarbamoyladenosine biosynthesis protein TsaD</fullName>
    </alternativeName>
    <alternativeName>
        <fullName evidence="1">tRNA threonylcarbamoyladenosine biosynthesis protein TsaD</fullName>
    </alternativeName>
</protein>
<reference key="1">
    <citation type="journal article" date="2007" name="PLoS Genet.">
        <title>Patterns and implications of gene gain and loss in the evolution of Prochlorococcus.</title>
        <authorList>
            <person name="Kettler G.C."/>
            <person name="Martiny A.C."/>
            <person name="Huang K."/>
            <person name="Zucker J."/>
            <person name="Coleman M.L."/>
            <person name="Rodrigue S."/>
            <person name="Chen F."/>
            <person name="Lapidus A."/>
            <person name="Ferriera S."/>
            <person name="Johnson J."/>
            <person name="Steglich C."/>
            <person name="Church G.M."/>
            <person name="Richardson P."/>
            <person name="Chisholm S.W."/>
        </authorList>
    </citation>
    <scope>NUCLEOTIDE SEQUENCE [LARGE SCALE GENOMIC DNA]</scope>
    <source>
        <strain>NATL2A</strain>
    </source>
</reference>
<accession>Q46GV3</accession>